<name>RS3_STAAB</name>
<comment type="function">
    <text evidence="1">Binds the lower part of the 30S subunit head. Binds mRNA in the 70S ribosome, positioning it for translation.</text>
</comment>
<comment type="subunit">
    <text evidence="1">Part of the 30S ribosomal subunit. Forms a tight complex with proteins S10 and S14.</text>
</comment>
<comment type="similarity">
    <text evidence="1">Belongs to the universal ribosomal protein uS3 family.</text>
</comment>
<keyword id="KW-0002">3D-structure</keyword>
<keyword id="KW-0687">Ribonucleoprotein</keyword>
<keyword id="KW-0689">Ribosomal protein</keyword>
<keyword id="KW-0694">RNA-binding</keyword>
<keyword id="KW-0699">rRNA-binding</keyword>
<dbReference type="EMBL" id="AJ938182">
    <property type="protein sequence ID" value="CAI81805.1"/>
    <property type="molecule type" value="Genomic_DNA"/>
</dbReference>
<dbReference type="RefSeq" id="WP_000529877.1">
    <property type="nucleotide sequence ID" value="NC_007622.1"/>
</dbReference>
<dbReference type="PDB" id="6FXC">
    <property type="method" value="EM"/>
    <property type="resolution" value="6.76 A"/>
    <property type="chains" value="Ac/Bc=2-203"/>
</dbReference>
<dbReference type="PDBsum" id="6FXC"/>
<dbReference type="EMDB" id="EMD-3637"/>
<dbReference type="SMR" id="Q2YYQ2"/>
<dbReference type="GeneID" id="98346556"/>
<dbReference type="KEGG" id="sab:SAB2116c"/>
<dbReference type="HOGENOM" id="CLU_058591_0_2_9"/>
<dbReference type="GO" id="GO:0022627">
    <property type="term" value="C:cytosolic small ribosomal subunit"/>
    <property type="evidence" value="ECO:0007669"/>
    <property type="project" value="TreeGrafter"/>
</dbReference>
<dbReference type="GO" id="GO:0003729">
    <property type="term" value="F:mRNA binding"/>
    <property type="evidence" value="ECO:0007669"/>
    <property type="project" value="UniProtKB-UniRule"/>
</dbReference>
<dbReference type="GO" id="GO:0019843">
    <property type="term" value="F:rRNA binding"/>
    <property type="evidence" value="ECO:0007669"/>
    <property type="project" value="UniProtKB-UniRule"/>
</dbReference>
<dbReference type="GO" id="GO:0003735">
    <property type="term" value="F:structural constituent of ribosome"/>
    <property type="evidence" value="ECO:0007669"/>
    <property type="project" value="InterPro"/>
</dbReference>
<dbReference type="GO" id="GO:0006412">
    <property type="term" value="P:translation"/>
    <property type="evidence" value="ECO:0007669"/>
    <property type="project" value="UniProtKB-UniRule"/>
</dbReference>
<dbReference type="CDD" id="cd02412">
    <property type="entry name" value="KH-II_30S_S3"/>
    <property type="match status" value="1"/>
</dbReference>
<dbReference type="FunFam" id="3.30.1140.32:FF:000001">
    <property type="entry name" value="30S ribosomal protein S3"/>
    <property type="match status" value="1"/>
</dbReference>
<dbReference type="FunFam" id="3.30.300.20:FF:000001">
    <property type="entry name" value="30S ribosomal protein S3"/>
    <property type="match status" value="1"/>
</dbReference>
<dbReference type="Gene3D" id="3.30.300.20">
    <property type="match status" value="1"/>
</dbReference>
<dbReference type="Gene3D" id="3.30.1140.32">
    <property type="entry name" value="Ribosomal protein S3, C-terminal domain"/>
    <property type="match status" value="1"/>
</dbReference>
<dbReference type="HAMAP" id="MF_01309_B">
    <property type="entry name" value="Ribosomal_uS3_B"/>
    <property type="match status" value="1"/>
</dbReference>
<dbReference type="InterPro" id="IPR004087">
    <property type="entry name" value="KH_dom"/>
</dbReference>
<dbReference type="InterPro" id="IPR015946">
    <property type="entry name" value="KH_dom-like_a/b"/>
</dbReference>
<dbReference type="InterPro" id="IPR004044">
    <property type="entry name" value="KH_dom_type_2"/>
</dbReference>
<dbReference type="InterPro" id="IPR009019">
    <property type="entry name" value="KH_sf_prok-type"/>
</dbReference>
<dbReference type="InterPro" id="IPR036419">
    <property type="entry name" value="Ribosomal_S3_C_sf"/>
</dbReference>
<dbReference type="InterPro" id="IPR005704">
    <property type="entry name" value="Ribosomal_uS3_bac-typ"/>
</dbReference>
<dbReference type="InterPro" id="IPR001351">
    <property type="entry name" value="Ribosomal_uS3_C"/>
</dbReference>
<dbReference type="InterPro" id="IPR018280">
    <property type="entry name" value="Ribosomal_uS3_CS"/>
</dbReference>
<dbReference type="NCBIfam" id="TIGR01009">
    <property type="entry name" value="rpsC_bact"/>
    <property type="match status" value="1"/>
</dbReference>
<dbReference type="PANTHER" id="PTHR11760">
    <property type="entry name" value="30S/40S RIBOSOMAL PROTEIN S3"/>
    <property type="match status" value="1"/>
</dbReference>
<dbReference type="PANTHER" id="PTHR11760:SF19">
    <property type="entry name" value="SMALL RIBOSOMAL SUBUNIT PROTEIN US3C"/>
    <property type="match status" value="1"/>
</dbReference>
<dbReference type="Pfam" id="PF07650">
    <property type="entry name" value="KH_2"/>
    <property type="match status" value="1"/>
</dbReference>
<dbReference type="Pfam" id="PF00189">
    <property type="entry name" value="Ribosomal_S3_C"/>
    <property type="match status" value="1"/>
</dbReference>
<dbReference type="SMART" id="SM00322">
    <property type="entry name" value="KH"/>
    <property type="match status" value="1"/>
</dbReference>
<dbReference type="SUPFAM" id="SSF54814">
    <property type="entry name" value="Prokaryotic type KH domain (KH-domain type II)"/>
    <property type="match status" value="1"/>
</dbReference>
<dbReference type="SUPFAM" id="SSF54821">
    <property type="entry name" value="Ribosomal protein S3 C-terminal domain"/>
    <property type="match status" value="1"/>
</dbReference>
<dbReference type="PROSITE" id="PS50823">
    <property type="entry name" value="KH_TYPE_2"/>
    <property type="match status" value="1"/>
</dbReference>
<dbReference type="PROSITE" id="PS00548">
    <property type="entry name" value="RIBOSOMAL_S3"/>
    <property type="match status" value="1"/>
</dbReference>
<gene>
    <name evidence="1" type="primary">rpsC</name>
    <name type="ordered locus">SAB2116c</name>
</gene>
<organism>
    <name type="scientific">Staphylococcus aureus (strain bovine RF122 / ET3-1)</name>
    <dbReference type="NCBI Taxonomy" id="273036"/>
    <lineage>
        <taxon>Bacteria</taxon>
        <taxon>Bacillati</taxon>
        <taxon>Bacillota</taxon>
        <taxon>Bacilli</taxon>
        <taxon>Bacillales</taxon>
        <taxon>Staphylococcaceae</taxon>
        <taxon>Staphylococcus</taxon>
    </lineage>
</organism>
<accession>Q2YYQ2</accession>
<sequence>MGQKINPIGLRVGIIRDWEAKWYAEKDFASLLHEDLKIRKFIDNELKEASVSHVEIERAANRINIAIHTGKPGMVIGKGGSEIEKLRNKLNALTDKKVHINVIEIKKVDLDARLVAENIARQLENRASFRRVQKQAITRAMKLGAKGIKTQVSGRLGGADIARAEQYSEGTVPLHTLRADIDYAHAEADTTYGKLGVKVWIYRGEVLPTKNTSGGGK</sequence>
<proteinExistence type="evidence at protein level"/>
<reference key="1">
    <citation type="journal article" date="2007" name="PLoS ONE">
        <title>Molecular correlates of host specialization in Staphylococcus aureus.</title>
        <authorList>
            <person name="Herron-Olson L."/>
            <person name="Fitzgerald J.R."/>
            <person name="Musser J.M."/>
            <person name="Kapur V."/>
        </authorList>
    </citation>
    <scope>NUCLEOTIDE SEQUENCE [LARGE SCALE GENOMIC DNA]</scope>
    <source>
        <strain>bovine RF122 / ET3-1</strain>
    </source>
</reference>
<feature type="chain" id="PRO_0000230729" description="Small ribosomal subunit protein uS3">
    <location>
        <begin position="1"/>
        <end position="217"/>
    </location>
</feature>
<feature type="domain" description="KH type-2" evidence="1">
    <location>
        <begin position="38"/>
        <end position="106"/>
    </location>
</feature>
<evidence type="ECO:0000255" key="1">
    <source>
        <dbReference type="HAMAP-Rule" id="MF_01309"/>
    </source>
</evidence>
<evidence type="ECO:0000305" key="2"/>
<protein>
    <recommendedName>
        <fullName evidence="1">Small ribosomal subunit protein uS3</fullName>
    </recommendedName>
    <alternativeName>
        <fullName evidence="2">30S ribosomal protein S3</fullName>
    </alternativeName>
</protein>